<evidence type="ECO:0000255" key="1"/>
<evidence type="ECO:0000256" key="2">
    <source>
        <dbReference type="SAM" id="MobiDB-lite"/>
    </source>
</evidence>
<proteinExistence type="predicted"/>
<sequence>MKIFQIQCSSFKESRWQKSKCDNCLKFHIDINNNSKTSNTDTDFDANTNINSNINSNINSNININNSGNNNKNSNNIEITENIDNKAKIINKHIKTITNSKPIPIPIPTPTPISIKEKEKEKEKEKEKEKEKEKEKEKEMKSTINLRSEDTTSNKSTIVFTECLEYKGHQWRPNICVTCFSPKNKHKNVLPETSTPLISQSSQTSTITPSSSSTSTSTSSISTHKTANNKTVITYISSTTTTTTTSSSSSSPPSSSIAGITNPTSRSSSPILKSVPPSAYSNVVIPINNINNSNSNSSSGGGNNNNKSISTPSSPIISRPITNKINNNNNNNQPQLHYNQPQSSSVSTTSSPIIRPVLRRQFQSFPSNPKISKAILEQCNIINNNSNSNNSNNKDPVILCKYTIESQPKSNISVLKPTLVEFINQPDSKDDESSVKSPPLPVESQPIFNSKQSATMDGITTHKSVSITISTSTSPSSTTTTTSTTTSIIAEEPSSPILPTASPSSSSSSIITTATASTIPMSPSLPSIPFHEFETMESSTTTTLLSENNGGGGGSSCNDNSRRNSLNILPLRLKSFSFSAPQSDSMIEQPEDDPFFDFEDLSDDDDSNDNDDEELKEINGEKIIQQNDLTPTTTITSTTTILQSPTLEKTLSTTTTTTIPSPSTNSRSICNTLMDSTDSINNTNTNTNTNTNTNTNTNTNTNTNTNTNANINNKVSTTTTTTTTKRRSLKMDQFKEKEDEWDQGVDLTSFLKRKPTLQRDFSYCNNKVMEISSVKEEAKRLHGGTGYIHQFAFEAFKDILEAKQTQINRAFCSQKIDAPDCEMLINEINTAKKLLEDLLELNSNSSGSGNNSNDNSGSSSPSSSKTNTLNQQSICIKSEI</sequence>
<protein>
    <recommendedName>
        <fullName>Uncharacterized protein DDB_G0281025</fullName>
    </recommendedName>
</protein>
<reference key="1">
    <citation type="journal article" date="2005" name="Nature">
        <title>The genome of the social amoeba Dictyostelium discoideum.</title>
        <authorList>
            <person name="Eichinger L."/>
            <person name="Pachebat J.A."/>
            <person name="Gloeckner G."/>
            <person name="Rajandream M.A."/>
            <person name="Sucgang R."/>
            <person name="Berriman M."/>
            <person name="Song J."/>
            <person name="Olsen R."/>
            <person name="Szafranski K."/>
            <person name="Xu Q."/>
            <person name="Tunggal B."/>
            <person name="Kummerfeld S."/>
            <person name="Madera M."/>
            <person name="Konfortov B.A."/>
            <person name="Rivero F."/>
            <person name="Bankier A.T."/>
            <person name="Lehmann R."/>
            <person name="Hamlin N."/>
            <person name="Davies R."/>
            <person name="Gaudet P."/>
            <person name="Fey P."/>
            <person name="Pilcher K."/>
            <person name="Chen G."/>
            <person name="Saunders D."/>
            <person name="Sodergren E.J."/>
            <person name="Davis P."/>
            <person name="Kerhornou A."/>
            <person name="Nie X."/>
            <person name="Hall N."/>
            <person name="Anjard C."/>
            <person name="Hemphill L."/>
            <person name="Bason N."/>
            <person name="Farbrother P."/>
            <person name="Desany B."/>
            <person name="Just E."/>
            <person name="Morio T."/>
            <person name="Rost R."/>
            <person name="Churcher C.M."/>
            <person name="Cooper J."/>
            <person name="Haydock S."/>
            <person name="van Driessche N."/>
            <person name="Cronin A."/>
            <person name="Goodhead I."/>
            <person name="Muzny D.M."/>
            <person name="Mourier T."/>
            <person name="Pain A."/>
            <person name="Lu M."/>
            <person name="Harper D."/>
            <person name="Lindsay R."/>
            <person name="Hauser H."/>
            <person name="James K.D."/>
            <person name="Quiles M."/>
            <person name="Madan Babu M."/>
            <person name="Saito T."/>
            <person name="Buchrieser C."/>
            <person name="Wardroper A."/>
            <person name="Felder M."/>
            <person name="Thangavelu M."/>
            <person name="Johnson D."/>
            <person name="Knights A."/>
            <person name="Loulseged H."/>
            <person name="Mungall K.L."/>
            <person name="Oliver K."/>
            <person name="Price C."/>
            <person name="Quail M.A."/>
            <person name="Urushihara H."/>
            <person name="Hernandez J."/>
            <person name="Rabbinowitsch E."/>
            <person name="Steffen D."/>
            <person name="Sanders M."/>
            <person name="Ma J."/>
            <person name="Kohara Y."/>
            <person name="Sharp S."/>
            <person name="Simmonds M.N."/>
            <person name="Spiegler S."/>
            <person name="Tivey A."/>
            <person name="Sugano S."/>
            <person name="White B."/>
            <person name="Walker D."/>
            <person name="Woodward J.R."/>
            <person name="Winckler T."/>
            <person name="Tanaka Y."/>
            <person name="Shaulsky G."/>
            <person name="Schleicher M."/>
            <person name="Weinstock G.M."/>
            <person name="Rosenthal A."/>
            <person name="Cox E.C."/>
            <person name="Chisholm R.L."/>
            <person name="Gibbs R.A."/>
            <person name="Loomis W.F."/>
            <person name="Platzer M."/>
            <person name="Kay R.R."/>
            <person name="Williams J.G."/>
            <person name="Dear P.H."/>
            <person name="Noegel A.A."/>
            <person name="Barrell B.G."/>
            <person name="Kuspa A."/>
        </authorList>
    </citation>
    <scope>NUCLEOTIDE SEQUENCE [LARGE SCALE GENOMIC DNA]</scope>
    <source>
        <strain>AX4</strain>
    </source>
</reference>
<feature type="chain" id="PRO_0000352397" description="Uncharacterized protein DDB_G0281025">
    <location>
        <begin position="1"/>
        <end position="880"/>
    </location>
</feature>
<feature type="region of interest" description="Disordered" evidence="2">
    <location>
        <begin position="101"/>
        <end position="149"/>
    </location>
</feature>
<feature type="region of interest" description="Disordered" evidence="2">
    <location>
        <begin position="191"/>
        <end position="224"/>
    </location>
</feature>
<feature type="region of interest" description="Disordered" evidence="2">
    <location>
        <begin position="240"/>
        <end position="273"/>
    </location>
</feature>
<feature type="region of interest" description="Disordered" evidence="2">
    <location>
        <begin position="294"/>
        <end position="350"/>
    </location>
</feature>
<feature type="region of interest" description="Disordered" evidence="2">
    <location>
        <begin position="425"/>
        <end position="446"/>
    </location>
</feature>
<feature type="region of interest" description="Disordered" evidence="2">
    <location>
        <begin position="470"/>
        <end position="508"/>
    </location>
</feature>
<feature type="region of interest" description="Disordered" evidence="2">
    <location>
        <begin position="536"/>
        <end position="561"/>
    </location>
</feature>
<feature type="region of interest" description="Disordered" evidence="2">
    <location>
        <begin position="580"/>
        <end position="613"/>
    </location>
</feature>
<feature type="region of interest" description="Disordered" evidence="2">
    <location>
        <begin position="682"/>
        <end position="713"/>
    </location>
</feature>
<feature type="region of interest" description="Disordered" evidence="2">
    <location>
        <begin position="844"/>
        <end position="880"/>
    </location>
</feature>
<feature type="coiled-coil region" evidence="1">
    <location>
        <begin position="113"/>
        <end position="147"/>
    </location>
</feature>
<feature type="compositionally biased region" description="Basic and acidic residues" evidence="2">
    <location>
        <begin position="115"/>
        <end position="149"/>
    </location>
</feature>
<feature type="compositionally biased region" description="Low complexity" evidence="2">
    <location>
        <begin position="193"/>
        <end position="223"/>
    </location>
</feature>
<feature type="compositionally biased region" description="Low complexity" evidence="2">
    <location>
        <begin position="240"/>
        <end position="256"/>
    </location>
</feature>
<feature type="compositionally biased region" description="Polar residues" evidence="2">
    <location>
        <begin position="257"/>
        <end position="271"/>
    </location>
</feature>
<feature type="compositionally biased region" description="Low complexity" evidence="2">
    <location>
        <begin position="294"/>
        <end position="332"/>
    </location>
</feature>
<feature type="compositionally biased region" description="Polar residues" evidence="2">
    <location>
        <begin position="333"/>
        <end position="342"/>
    </location>
</feature>
<feature type="compositionally biased region" description="Low complexity" evidence="2">
    <location>
        <begin position="536"/>
        <end position="548"/>
    </location>
</feature>
<feature type="compositionally biased region" description="Acidic residues" evidence="2">
    <location>
        <begin position="589"/>
        <end position="613"/>
    </location>
</feature>
<feature type="compositionally biased region" description="Low complexity" evidence="2">
    <location>
        <begin position="844"/>
        <end position="864"/>
    </location>
</feature>
<feature type="compositionally biased region" description="Polar residues" evidence="2">
    <location>
        <begin position="865"/>
        <end position="880"/>
    </location>
</feature>
<keyword id="KW-0175">Coiled coil</keyword>
<keyword id="KW-1185">Reference proteome</keyword>
<accession>Q54UK3</accession>
<gene>
    <name type="ORF">DDB_G0281025</name>
</gene>
<organism>
    <name type="scientific">Dictyostelium discoideum</name>
    <name type="common">Social amoeba</name>
    <dbReference type="NCBI Taxonomy" id="44689"/>
    <lineage>
        <taxon>Eukaryota</taxon>
        <taxon>Amoebozoa</taxon>
        <taxon>Evosea</taxon>
        <taxon>Eumycetozoa</taxon>
        <taxon>Dictyostelia</taxon>
        <taxon>Dictyosteliales</taxon>
        <taxon>Dictyosteliaceae</taxon>
        <taxon>Dictyostelium</taxon>
    </lineage>
</organism>
<name>Y3961_DICDI</name>
<dbReference type="EMBL" id="AAFI02000040">
    <property type="protein sequence ID" value="EAL66809.1"/>
    <property type="molecule type" value="Genomic_DNA"/>
</dbReference>
<dbReference type="RefSeq" id="XP_640773.1">
    <property type="nucleotide sequence ID" value="XM_635681.1"/>
</dbReference>
<dbReference type="SMR" id="Q54UK3"/>
<dbReference type="FunCoup" id="Q54UK3">
    <property type="interactions" value="435"/>
</dbReference>
<dbReference type="GlyGen" id="Q54UK3">
    <property type="glycosylation" value="1 site"/>
</dbReference>
<dbReference type="PaxDb" id="44689-DDB0203961"/>
<dbReference type="EnsemblProtists" id="EAL66809">
    <property type="protein sequence ID" value="EAL66809"/>
    <property type="gene ID" value="DDB_G0281025"/>
</dbReference>
<dbReference type="GeneID" id="8622826"/>
<dbReference type="KEGG" id="ddi:DDB_G0281025"/>
<dbReference type="dictyBase" id="DDB_G0281025"/>
<dbReference type="VEuPathDB" id="AmoebaDB:DDB_G0281025"/>
<dbReference type="eggNOG" id="ENOG502RE81">
    <property type="taxonomic scope" value="Eukaryota"/>
</dbReference>
<dbReference type="HOGENOM" id="CLU_327184_0_0_1"/>
<dbReference type="InParanoid" id="Q54UK3"/>
<dbReference type="OMA" id="QWRPNIC"/>
<dbReference type="PRO" id="PR:Q54UK3"/>
<dbReference type="Proteomes" id="UP000002195">
    <property type="component" value="Chromosome 3"/>
</dbReference>
<dbReference type="PANTHER" id="PTHR42264">
    <property type="entry name" value="EPHRIN_REC_LIKE DOMAIN-CONTAINING PROTEIN"/>
    <property type="match status" value="1"/>
</dbReference>